<organism>
    <name type="scientific">Ribes americanum</name>
    <name type="common">American black currant</name>
    <dbReference type="NCBI Taxonomy" id="3802"/>
    <lineage>
        <taxon>Eukaryota</taxon>
        <taxon>Viridiplantae</taxon>
        <taxon>Streptophyta</taxon>
        <taxon>Embryophyta</taxon>
        <taxon>Tracheophyta</taxon>
        <taxon>Spermatophyta</taxon>
        <taxon>Magnoliopsida</taxon>
        <taxon>eudicotyledons</taxon>
        <taxon>Gunneridae</taxon>
        <taxon>Pentapetalae</taxon>
        <taxon>Saxifragales</taxon>
        <taxon>Grossulariaceae</taxon>
        <taxon>Ribes</taxon>
    </lineage>
</organism>
<sequence>MSPQTETKASVGFKAGVKDYKLTYYTPEYETKDTDILAAFRVTPQPGVPPEEAG</sequence>
<geneLocation type="chloroplast"/>
<dbReference type="EC" id="4.1.1.39"/>
<dbReference type="EMBL" id="X69751">
    <property type="protein sequence ID" value="CAA49406.1"/>
    <property type="molecule type" value="Genomic_DNA"/>
</dbReference>
<dbReference type="PIR" id="S31536">
    <property type="entry name" value="S31536"/>
</dbReference>
<dbReference type="SMR" id="P31199"/>
<dbReference type="GO" id="GO:0009507">
    <property type="term" value="C:chloroplast"/>
    <property type="evidence" value="ECO:0007669"/>
    <property type="project" value="UniProtKB-SubCell"/>
</dbReference>
<dbReference type="GO" id="GO:0004497">
    <property type="term" value="F:monooxygenase activity"/>
    <property type="evidence" value="ECO:0007669"/>
    <property type="project" value="UniProtKB-KW"/>
</dbReference>
<dbReference type="GO" id="GO:0016984">
    <property type="term" value="F:ribulose-bisphosphate carboxylase activity"/>
    <property type="evidence" value="ECO:0007669"/>
    <property type="project" value="UniProtKB-EC"/>
</dbReference>
<dbReference type="GO" id="GO:0009853">
    <property type="term" value="P:photorespiration"/>
    <property type="evidence" value="ECO:0007669"/>
    <property type="project" value="UniProtKB-KW"/>
</dbReference>
<dbReference type="GO" id="GO:0019253">
    <property type="term" value="P:reductive pentose-phosphate cycle"/>
    <property type="evidence" value="ECO:0007669"/>
    <property type="project" value="UniProtKB-KW"/>
</dbReference>
<dbReference type="Gene3D" id="3.30.70.150">
    <property type="entry name" value="RuBisCO large subunit, N-terminal domain"/>
    <property type="match status" value="1"/>
</dbReference>
<dbReference type="InterPro" id="IPR033966">
    <property type="entry name" value="RuBisCO"/>
</dbReference>
<dbReference type="InterPro" id="IPR017443">
    <property type="entry name" value="RuBisCO_lsu_fd_N"/>
</dbReference>
<dbReference type="InterPro" id="IPR036422">
    <property type="entry name" value="RuBisCO_lsu_N_sf"/>
</dbReference>
<dbReference type="PANTHER" id="PTHR42704">
    <property type="entry name" value="RIBULOSE BISPHOSPHATE CARBOXYLASE"/>
    <property type="match status" value="1"/>
</dbReference>
<dbReference type="PANTHER" id="PTHR42704:SF15">
    <property type="entry name" value="RIBULOSE BISPHOSPHATE CARBOXYLASE LARGE CHAIN"/>
    <property type="match status" value="1"/>
</dbReference>
<dbReference type="Pfam" id="PF02788">
    <property type="entry name" value="RuBisCO_large_N"/>
    <property type="match status" value="1"/>
</dbReference>
<dbReference type="SUPFAM" id="SSF54966">
    <property type="entry name" value="RuBisCO, large subunit, small (N-terminal) domain"/>
    <property type="match status" value="1"/>
</dbReference>
<name>RBL_RIBAM</name>
<accession>P31199</accession>
<reference key="1">
    <citation type="journal article" date="1994" name="Mol. Phylogenet. Evol.">
        <title>Molecular phylogeny of families related to Celastrales based on rbcL 5' flanking sequences.</title>
        <authorList>
            <person name="Savolainen V."/>
            <person name="Manen J.F."/>
            <person name="Douzery E.J.P."/>
            <person name="Spichiger R."/>
        </authorList>
    </citation>
    <scope>NUCLEOTIDE SEQUENCE [GENOMIC DNA]</scope>
    <source>
        <strain>Sample RA12</strain>
    </source>
</reference>
<proteinExistence type="inferred from homology"/>
<keyword id="KW-0007">Acetylation</keyword>
<keyword id="KW-0113">Calvin cycle</keyword>
<keyword id="KW-0120">Carbon dioxide fixation</keyword>
<keyword id="KW-0150">Chloroplast</keyword>
<keyword id="KW-0456">Lyase</keyword>
<keyword id="KW-0488">Methylation</keyword>
<keyword id="KW-0503">Monooxygenase</keyword>
<keyword id="KW-0560">Oxidoreductase</keyword>
<keyword id="KW-0601">Photorespiration</keyword>
<keyword id="KW-0602">Photosynthesis</keyword>
<keyword id="KW-0934">Plastid</keyword>
<gene>
    <name type="primary">rbcL</name>
</gene>
<evidence type="ECO:0000250" key="1"/>
<evidence type="ECO:0000305" key="2"/>
<feature type="propeptide" id="PRO_0000031387" evidence="1">
    <location>
        <begin position="1"/>
        <end position="2"/>
    </location>
</feature>
<feature type="chain" id="PRO_0000031388" description="Ribulose bisphosphate carboxylase large chain">
    <location>
        <begin position="3"/>
        <end position="54" status="greater than"/>
    </location>
</feature>
<feature type="modified residue" description="N-acetylproline" evidence="1">
    <location>
        <position position="3"/>
    </location>
</feature>
<feature type="modified residue" description="N6,N6,N6-trimethyllysine" evidence="1">
    <location>
        <position position="14"/>
    </location>
</feature>
<feature type="non-terminal residue">
    <location>
        <position position="54"/>
    </location>
</feature>
<comment type="function">
    <text evidence="1">RuBisCO catalyzes two reactions: the carboxylation of D-ribulose 1,5-bisphosphate, the primary event in carbon dioxide fixation, as well as the oxidative fragmentation of the pentose substrate in the photorespiration process. Both reactions occur simultaneously and in competition at the same active site (By similarity).</text>
</comment>
<comment type="catalytic activity">
    <reaction>
        <text>2 (2R)-3-phosphoglycerate + 2 H(+) = D-ribulose 1,5-bisphosphate + CO2 + H2O</text>
        <dbReference type="Rhea" id="RHEA:23124"/>
        <dbReference type="ChEBI" id="CHEBI:15377"/>
        <dbReference type="ChEBI" id="CHEBI:15378"/>
        <dbReference type="ChEBI" id="CHEBI:16526"/>
        <dbReference type="ChEBI" id="CHEBI:57870"/>
        <dbReference type="ChEBI" id="CHEBI:58272"/>
        <dbReference type="EC" id="4.1.1.39"/>
    </reaction>
</comment>
<comment type="catalytic activity">
    <reaction>
        <text>D-ribulose 1,5-bisphosphate + O2 = 2-phosphoglycolate + (2R)-3-phosphoglycerate + 2 H(+)</text>
        <dbReference type="Rhea" id="RHEA:36631"/>
        <dbReference type="ChEBI" id="CHEBI:15378"/>
        <dbReference type="ChEBI" id="CHEBI:15379"/>
        <dbReference type="ChEBI" id="CHEBI:57870"/>
        <dbReference type="ChEBI" id="CHEBI:58033"/>
        <dbReference type="ChEBI" id="CHEBI:58272"/>
    </reaction>
</comment>
<comment type="subunit">
    <text evidence="1">Heterohexadecamer of 8 large chains and 8 small chains.</text>
</comment>
<comment type="subcellular location">
    <subcellularLocation>
        <location>Plastid</location>
        <location>Chloroplast</location>
    </subcellularLocation>
</comment>
<comment type="miscellaneous">
    <text evidence="1">The basic functional RuBisCO is composed of a large chain homodimer in a 'head-to-tail' conformation. In form I RuBisCO this homodimer is arranged in a barrel-like tetramer with the small subunits forming a tetrameric 'cap' on each end of the 'barrel' (By similarity).</text>
</comment>
<comment type="similarity">
    <text evidence="2">Belongs to the RuBisCO large chain family. Type I subfamily.</text>
</comment>
<protein>
    <recommendedName>
        <fullName>Ribulose bisphosphate carboxylase large chain</fullName>
        <shortName>RuBisCO large subunit</shortName>
        <ecNumber>4.1.1.39</ecNumber>
    </recommendedName>
</protein>